<feature type="signal peptide" evidence="4">
    <location>
        <begin position="1"/>
        <end position="35"/>
    </location>
</feature>
<feature type="chain" id="PRO_0000231615" description="Dipeptidase 3">
    <location>
        <begin position="36"/>
        <end position="459"/>
    </location>
</feature>
<feature type="propeptide" id="PRO_0000231616" description="Removed in mature form" evidence="1">
    <location>
        <begin position="460"/>
        <end position="487"/>
    </location>
</feature>
<feature type="region of interest" description="Disordered" evidence="6">
    <location>
        <begin position="41"/>
        <end position="74"/>
    </location>
</feature>
<feature type="compositionally biased region" description="Low complexity" evidence="6">
    <location>
        <begin position="41"/>
        <end position="60"/>
    </location>
</feature>
<feature type="lipid moiety-binding region" description="GPI-anchor amidated serine" evidence="4">
    <location>
        <position position="459"/>
    </location>
</feature>
<feature type="glycosylation site" description="N-linked (GlcNAc...) asparagine" evidence="4">
    <location>
        <position position="331"/>
    </location>
</feature>
<feature type="disulfide bond" evidence="5">
    <location>
        <begin position="143"/>
        <end position="222"/>
    </location>
</feature>
<feature type="disulfide bond" evidence="5">
    <location>
        <begin position="294"/>
        <end position="326"/>
    </location>
</feature>
<feature type="disulfide bond" description="Interchain" evidence="5">
    <location>
        <position position="431"/>
    </location>
</feature>
<dbReference type="EMBL" id="BC085826">
    <property type="protein sequence ID" value="AAH85826.1"/>
    <property type="molecule type" value="mRNA"/>
</dbReference>
<dbReference type="RefSeq" id="NP_001008384.1">
    <property type="nucleotide sequence ID" value="NM_001008383.1"/>
</dbReference>
<dbReference type="RefSeq" id="XP_006255579.1">
    <property type="nucleotide sequence ID" value="XM_006255517.5"/>
</dbReference>
<dbReference type="RefSeq" id="XP_008770743.1">
    <property type="nucleotide sequence ID" value="XM_008772521.1"/>
</dbReference>
<dbReference type="SMR" id="Q5U2X4"/>
<dbReference type="FunCoup" id="Q5U2X4">
    <property type="interactions" value="43"/>
</dbReference>
<dbReference type="STRING" id="10116.ENSRNOP00000026809"/>
<dbReference type="MEROPS" id="M19.011"/>
<dbReference type="GlyCosmos" id="Q5U2X4">
    <property type="glycosylation" value="1 site, No reported glycans"/>
</dbReference>
<dbReference type="GlyGen" id="Q5U2X4">
    <property type="glycosylation" value="1 site"/>
</dbReference>
<dbReference type="PhosphoSitePlus" id="Q5U2X4"/>
<dbReference type="PaxDb" id="10116-ENSRNOP00000026809"/>
<dbReference type="Ensembl" id="ENSRNOT00000026809.6">
    <property type="protein sequence ID" value="ENSRNOP00000026809.3"/>
    <property type="gene ID" value="ENSRNOG00000019757.6"/>
</dbReference>
<dbReference type="GeneID" id="364994"/>
<dbReference type="KEGG" id="rno:364994"/>
<dbReference type="UCSC" id="RGD:1305484">
    <property type="organism name" value="rat"/>
</dbReference>
<dbReference type="AGR" id="RGD:1305484"/>
<dbReference type="CTD" id="64180"/>
<dbReference type="RGD" id="1305484">
    <property type="gene designation" value="Dpep3"/>
</dbReference>
<dbReference type="eggNOG" id="KOG4127">
    <property type="taxonomic scope" value="Eukaryota"/>
</dbReference>
<dbReference type="GeneTree" id="ENSGT00940000162331"/>
<dbReference type="HOGENOM" id="CLU_031404_4_1_1"/>
<dbReference type="InParanoid" id="Q5U2X4"/>
<dbReference type="OMA" id="SRHNVFG"/>
<dbReference type="OrthoDB" id="445695at2759"/>
<dbReference type="PhylomeDB" id="Q5U2X4"/>
<dbReference type="TreeFam" id="TF324523"/>
<dbReference type="PRO" id="PR:Q5U2X4"/>
<dbReference type="Proteomes" id="UP000002494">
    <property type="component" value="Chromosome 19"/>
</dbReference>
<dbReference type="Bgee" id="ENSRNOG00000019757">
    <property type="expression patterns" value="Expressed in testis and 12 other cell types or tissues"/>
</dbReference>
<dbReference type="GO" id="GO:0001669">
    <property type="term" value="C:acrosomal vesicle"/>
    <property type="evidence" value="ECO:0000250"/>
    <property type="project" value="UniProtKB"/>
</dbReference>
<dbReference type="GO" id="GO:0016020">
    <property type="term" value="C:membrane"/>
    <property type="evidence" value="ECO:0000250"/>
    <property type="project" value="UniProtKB"/>
</dbReference>
<dbReference type="GO" id="GO:0005886">
    <property type="term" value="C:plasma membrane"/>
    <property type="evidence" value="ECO:0000250"/>
    <property type="project" value="UniProtKB"/>
</dbReference>
<dbReference type="GO" id="GO:0098552">
    <property type="term" value="C:side of membrane"/>
    <property type="evidence" value="ECO:0007669"/>
    <property type="project" value="UniProtKB-KW"/>
</dbReference>
<dbReference type="GO" id="GO:0016805">
    <property type="term" value="F:dipeptidase activity"/>
    <property type="evidence" value="ECO:0000250"/>
    <property type="project" value="UniProtKB"/>
</dbReference>
<dbReference type="GO" id="GO:0008233">
    <property type="term" value="F:peptidase activity"/>
    <property type="evidence" value="ECO:0000266"/>
    <property type="project" value="RGD"/>
</dbReference>
<dbReference type="GO" id="GO:0006508">
    <property type="term" value="P:proteolysis"/>
    <property type="evidence" value="ECO:0000266"/>
    <property type="project" value="RGD"/>
</dbReference>
<dbReference type="CDD" id="cd01301">
    <property type="entry name" value="rDP_like"/>
    <property type="match status" value="1"/>
</dbReference>
<dbReference type="FunFam" id="3.20.20.140:FF:000030">
    <property type="entry name" value="Dipeptidase"/>
    <property type="match status" value="1"/>
</dbReference>
<dbReference type="Gene3D" id="3.20.20.140">
    <property type="entry name" value="Metal-dependent hydrolases"/>
    <property type="match status" value="1"/>
</dbReference>
<dbReference type="InterPro" id="IPR000180">
    <property type="entry name" value="Dipep_AS"/>
</dbReference>
<dbReference type="InterPro" id="IPR032466">
    <property type="entry name" value="Metal_Hydrolase"/>
</dbReference>
<dbReference type="InterPro" id="IPR008257">
    <property type="entry name" value="Pept_M19"/>
</dbReference>
<dbReference type="PANTHER" id="PTHR10443:SF14">
    <property type="entry name" value="DIPEPTIDASE 3"/>
    <property type="match status" value="1"/>
</dbReference>
<dbReference type="PANTHER" id="PTHR10443">
    <property type="entry name" value="MICROSOMAL DIPEPTIDASE"/>
    <property type="match status" value="1"/>
</dbReference>
<dbReference type="Pfam" id="PF01244">
    <property type="entry name" value="Peptidase_M19"/>
    <property type="match status" value="1"/>
</dbReference>
<dbReference type="SUPFAM" id="SSF51556">
    <property type="entry name" value="Metallo-dependent hydrolases"/>
    <property type="match status" value="1"/>
</dbReference>
<dbReference type="PROSITE" id="PS00869">
    <property type="entry name" value="RENAL_DIPEPTIDASE_1"/>
    <property type="match status" value="1"/>
</dbReference>
<dbReference type="PROSITE" id="PS51365">
    <property type="entry name" value="RENAL_DIPEPTIDASE_2"/>
    <property type="match status" value="1"/>
</dbReference>
<evidence type="ECO:0000250" key="1">
    <source>
        <dbReference type="UniProtKB" id="P16444"/>
    </source>
</evidence>
<evidence type="ECO:0000250" key="2">
    <source>
        <dbReference type="UniProtKB" id="Q9DA79"/>
    </source>
</evidence>
<evidence type="ECO:0000250" key="3">
    <source>
        <dbReference type="UniProtKB" id="Q9H4B8"/>
    </source>
</evidence>
<evidence type="ECO:0000255" key="4"/>
<evidence type="ECO:0000255" key="5">
    <source>
        <dbReference type="PROSITE-ProRule" id="PRU10073"/>
    </source>
</evidence>
<evidence type="ECO:0000256" key="6">
    <source>
        <dbReference type="SAM" id="MobiDB-lite"/>
    </source>
</evidence>
<comment type="function">
    <text evidence="3">Lacks dipeptidase activity and is unable to hydrolyze cystinyl-bis-glycine, leukotriene D4 and the beta-lactam antibiotic imipenem (By similarity). The absence of activity may be due to the inability of serine (instead of aspartate found in DPEP1/2) at position 356 to function as the acid/base catalyst and activate the nucleophilic water/hydroxide (By similarity).</text>
</comment>
<comment type="subunit">
    <text evidence="2 5">Homodimer; disulfide-linked (By similarity). Interacts with TEX101; co-localized on the cell surface of spermatocytes, spermatids, and testicular spermatozoa, co-localized only in cytoplasmic droplets of caput and corpus epididymal sperm (By similarity).</text>
</comment>
<comment type="subcellular location">
    <subcellularLocation>
        <location evidence="2">Membrane</location>
        <topology evidence="2">Lipid-anchor</topology>
        <topology evidence="2">GPI-anchor</topology>
    </subcellularLocation>
</comment>
<comment type="similarity">
    <text evidence="5">Belongs to the metallo-dependent hydrolases superfamily. Peptidase M19 family.</text>
</comment>
<keyword id="KW-1015">Disulfide bond</keyword>
<keyword id="KW-0325">Glycoprotein</keyword>
<keyword id="KW-0336">GPI-anchor</keyword>
<keyword id="KW-0449">Lipoprotein</keyword>
<keyword id="KW-0472">Membrane</keyword>
<keyword id="KW-1185">Reference proteome</keyword>
<keyword id="KW-0732">Signal</keyword>
<sequence length="488" mass="53370">MQPTGPEGPRALSLRPLGHRLSLLGVLLIIPSLWVTCNQTTPSLSSAPTSPGASSAMTTPGIPNDTTTSGVTSDPRLREQALALMRDFPLVDGHNDLPLLLRELFQNKLQDVNLHNFTRGQTSLDRLRDGLVGAQFWSAYIPCQTQDRDAVRVALEQIDLIRRMCSAYPELELVTSADGLNSTQKLACLIGLEGGHSLDTSLAVLRSFYELGVRYLTLTFTCSTPWAESATKFRHHFYTNISGLTSFGEKVVEEMNRIGMMIDLSHASDTLVKQTLEASRAPVIFSHSAARSVCDNLLNVPDDILQLLKKNGGIVMVTLSMGVLQCSLLANVSTVADHFDHIRTVIGSEFIGIGGSYDGSGRFPQGLEDVSTYPVLLEELLRRGWGEQELQGVLRGNLLRVFRQVEQVREKSLGQSPVEVVFPERQQSSTCHSHLLPQSQDAHLKVTKLPSSQVLQRASKAPPCPLLGLVAAVTSPAFTLWLCCSGHR</sequence>
<reference key="1">
    <citation type="journal article" date="2004" name="Genome Res.">
        <title>The status, quality, and expansion of the NIH full-length cDNA project: the Mammalian Gene Collection (MGC).</title>
        <authorList>
            <consortium name="The MGC Project Team"/>
        </authorList>
    </citation>
    <scope>NUCLEOTIDE SEQUENCE [LARGE SCALE MRNA]</scope>
    <source>
        <tissue>Testis</tissue>
    </source>
</reference>
<gene>
    <name type="primary">Dpep3</name>
</gene>
<organism>
    <name type="scientific">Rattus norvegicus</name>
    <name type="common">Rat</name>
    <dbReference type="NCBI Taxonomy" id="10116"/>
    <lineage>
        <taxon>Eukaryota</taxon>
        <taxon>Metazoa</taxon>
        <taxon>Chordata</taxon>
        <taxon>Craniata</taxon>
        <taxon>Vertebrata</taxon>
        <taxon>Euteleostomi</taxon>
        <taxon>Mammalia</taxon>
        <taxon>Eutheria</taxon>
        <taxon>Euarchontoglires</taxon>
        <taxon>Glires</taxon>
        <taxon>Rodentia</taxon>
        <taxon>Myomorpha</taxon>
        <taxon>Muroidea</taxon>
        <taxon>Muridae</taxon>
        <taxon>Murinae</taxon>
        <taxon>Rattus</taxon>
    </lineage>
</organism>
<accession>Q5U2X4</accession>
<name>DPEP3_RAT</name>
<protein>
    <recommendedName>
        <fullName>Dipeptidase 3</fullName>
    </recommendedName>
</protein>
<proteinExistence type="evidence at transcript level"/>